<feature type="chain" id="PRO_0000229996" description="Gamma-glutamyl phosphate reductase">
    <location>
        <begin position="1"/>
        <end position="415"/>
    </location>
</feature>
<keyword id="KW-0028">Amino-acid biosynthesis</keyword>
<keyword id="KW-0963">Cytoplasm</keyword>
<keyword id="KW-0521">NADP</keyword>
<keyword id="KW-0560">Oxidoreductase</keyword>
<keyword id="KW-0641">Proline biosynthesis</keyword>
<keyword id="KW-1185">Reference proteome</keyword>
<protein>
    <recommendedName>
        <fullName evidence="1">Gamma-glutamyl phosphate reductase</fullName>
        <shortName evidence="1">GPR</shortName>
        <ecNumber evidence="1">1.2.1.41</ecNumber>
    </recommendedName>
    <alternativeName>
        <fullName evidence="1">Glutamate-5-semialdehyde dehydrogenase</fullName>
    </alternativeName>
    <alternativeName>
        <fullName evidence="1">Glutamyl-gamma-semialdehyde dehydrogenase</fullName>
        <shortName evidence="1">GSA dehydrogenase</shortName>
    </alternativeName>
</protein>
<name>PROA_CARHZ</name>
<organism>
    <name type="scientific">Carboxydothermus hydrogenoformans (strain ATCC BAA-161 / DSM 6008 / Z-2901)</name>
    <dbReference type="NCBI Taxonomy" id="246194"/>
    <lineage>
        <taxon>Bacteria</taxon>
        <taxon>Bacillati</taxon>
        <taxon>Bacillota</taxon>
        <taxon>Clostridia</taxon>
        <taxon>Thermoanaerobacterales</taxon>
        <taxon>Thermoanaerobacteraceae</taxon>
        <taxon>Carboxydothermus</taxon>
    </lineage>
</organism>
<accession>Q3AF39</accession>
<reference key="1">
    <citation type="journal article" date="2005" name="PLoS Genet.">
        <title>Life in hot carbon monoxide: the complete genome sequence of Carboxydothermus hydrogenoformans Z-2901.</title>
        <authorList>
            <person name="Wu M."/>
            <person name="Ren Q."/>
            <person name="Durkin A.S."/>
            <person name="Daugherty S.C."/>
            <person name="Brinkac L.M."/>
            <person name="Dodson R.J."/>
            <person name="Madupu R."/>
            <person name="Sullivan S.A."/>
            <person name="Kolonay J.F."/>
            <person name="Nelson W.C."/>
            <person name="Tallon L.J."/>
            <person name="Jones K.M."/>
            <person name="Ulrich L.E."/>
            <person name="Gonzalez J.M."/>
            <person name="Zhulin I.B."/>
            <person name="Robb F.T."/>
            <person name="Eisen J.A."/>
        </authorList>
    </citation>
    <scope>NUCLEOTIDE SEQUENCE [LARGE SCALE GENOMIC DNA]</scope>
    <source>
        <strain>ATCC BAA-161 / DSM 6008 / Z-2901</strain>
    </source>
</reference>
<gene>
    <name evidence="1" type="primary">proA</name>
    <name type="ordered locus">CHY_0383</name>
</gene>
<evidence type="ECO:0000255" key="1">
    <source>
        <dbReference type="HAMAP-Rule" id="MF_00412"/>
    </source>
</evidence>
<proteinExistence type="inferred from homology"/>
<sequence>MDEVLNLAKKAKEASKKLAQLSTEQKNRALLKIAQYLEENMEKILTENQKDLAEAKKGGLSPAFIERLTLNEKRILDMAEGVRQVAKLPDPVGEVLGMTRRPNGLVIGQVRVPLGVVGIIYESRPNVTVDAAALCLKAGNAVILRGGKEAFNSNLALVTLMEEALRSEEIPEGAVGMIKTTSRDAANYLMRLNGYLDVLIPRGGAGLIKTVVENSTVPVIETGVGNCHVYVEEDADLEMAERIIINAKCQRPAVCNAMETLLVHEKIAPVFLPQIGKALKENGVEIRGCEVTRRYIPDALPATEEDYYTEFLDLILAVRVVRDLDEAIAHITKYGSGHSEAIVTRDYFKARRFTEEVDAAAVYVNASTRFTDGFEFGFGAEIGISTQKLHARGPMGLKELTTTKYVIYGTGQIRG</sequence>
<comment type="function">
    <text evidence="1">Catalyzes the NADPH-dependent reduction of L-glutamate 5-phosphate into L-glutamate 5-semialdehyde and phosphate. The product spontaneously undergoes cyclization to form 1-pyrroline-5-carboxylate.</text>
</comment>
<comment type="catalytic activity">
    <reaction evidence="1">
        <text>L-glutamate 5-semialdehyde + phosphate + NADP(+) = L-glutamyl 5-phosphate + NADPH + H(+)</text>
        <dbReference type="Rhea" id="RHEA:19541"/>
        <dbReference type="ChEBI" id="CHEBI:15378"/>
        <dbReference type="ChEBI" id="CHEBI:43474"/>
        <dbReference type="ChEBI" id="CHEBI:57783"/>
        <dbReference type="ChEBI" id="CHEBI:58066"/>
        <dbReference type="ChEBI" id="CHEBI:58274"/>
        <dbReference type="ChEBI" id="CHEBI:58349"/>
        <dbReference type="EC" id="1.2.1.41"/>
    </reaction>
</comment>
<comment type="pathway">
    <text evidence="1">Amino-acid biosynthesis; L-proline biosynthesis; L-glutamate 5-semialdehyde from L-glutamate: step 2/2.</text>
</comment>
<comment type="subcellular location">
    <subcellularLocation>
        <location evidence="1">Cytoplasm</location>
    </subcellularLocation>
</comment>
<comment type="similarity">
    <text evidence="1">Belongs to the gamma-glutamyl phosphate reductase family.</text>
</comment>
<dbReference type="EC" id="1.2.1.41" evidence="1"/>
<dbReference type="EMBL" id="CP000141">
    <property type="protein sequence ID" value="ABB13750.1"/>
    <property type="molecule type" value="Genomic_DNA"/>
</dbReference>
<dbReference type="RefSeq" id="WP_011343321.1">
    <property type="nucleotide sequence ID" value="NC_007503.1"/>
</dbReference>
<dbReference type="SMR" id="Q3AF39"/>
<dbReference type="FunCoup" id="Q3AF39">
    <property type="interactions" value="337"/>
</dbReference>
<dbReference type="STRING" id="246194.CHY_0383"/>
<dbReference type="KEGG" id="chy:CHY_0383"/>
<dbReference type="eggNOG" id="COG0014">
    <property type="taxonomic scope" value="Bacteria"/>
</dbReference>
<dbReference type="HOGENOM" id="CLU_030231_0_0_9"/>
<dbReference type="InParanoid" id="Q3AF39"/>
<dbReference type="OrthoDB" id="9809970at2"/>
<dbReference type="UniPathway" id="UPA00098">
    <property type="reaction ID" value="UER00360"/>
</dbReference>
<dbReference type="Proteomes" id="UP000002706">
    <property type="component" value="Chromosome"/>
</dbReference>
<dbReference type="GO" id="GO:0005737">
    <property type="term" value="C:cytoplasm"/>
    <property type="evidence" value="ECO:0007669"/>
    <property type="project" value="UniProtKB-SubCell"/>
</dbReference>
<dbReference type="GO" id="GO:0004350">
    <property type="term" value="F:glutamate-5-semialdehyde dehydrogenase activity"/>
    <property type="evidence" value="ECO:0007669"/>
    <property type="project" value="UniProtKB-UniRule"/>
</dbReference>
<dbReference type="GO" id="GO:0050661">
    <property type="term" value="F:NADP binding"/>
    <property type="evidence" value="ECO:0007669"/>
    <property type="project" value="InterPro"/>
</dbReference>
<dbReference type="GO" id="GO:0055129">
    <property type="term" value="P:L-proline biosynthetic process"/>
    <property type="evidence" value="ECO:0007669"/>
    <property type="project" value="UniProtKB-UniRule"/>
</dbReference>
<dbReference type="CDD" id="cd07079">
    <property type="entry name" value="ALDH_F18-19_ProA-GPR"/>
    <property type="match status" value="1"/>
</dbReference>
<dbReference type="FunFam" id="3.40.309.10:FF:000006">
    <property type="entry name" value="Gamma-glutamyl phosphate reductase"/>
    <property type="match status" value="1"/>
</dbReference>
<dbReference type="Gene3D" id="3.40.605.10">
    <property type="entry name" value="Aldehyde Dehydrogenase, Chain A, domain 1"/>
    <property type="match status" value="1"/>
</dbReference>
<dbReference type="Gene3D" id="3.40.309.10">
    <property type="entry name" value="Aldehyde Dehydrogenase, Chain A, domain 2"/>
    <property type="match status" value="1"/>
</dbReference>
<dbReference type="HAMAP" id="MF_00412">
    <property type="entry name" value="ProA"/>
    <property type="match status" value="1"/>
</dbReference>
<dbReference type="InterPro" id="IPR016161">
    <property type="entry name" value="Ald_DH/histidinol_DH"/>
</dbReference>
<dbReference type="InterPro" id="IPR016163">
    <property type="entry name" value="Ald_DH_C"/>
</dbReference>
<dbReference type="InterPro" id="IPR016162">
    <property type="entry name" value="Ald_DH_N"/>
</dbReference>
<dbReference type="InterPro" id="IPR015590">
    <property type="entry name" value="Aldehyde_DH_dom"/>
</dbReference>
<dbReference type="InterPro" id="IPR020593">
    <property type="entry name" value="G-glutamylP_reductase_CS"/>
</dbReference>
<dbReference type="InterPro" id="IPR012134">
    <property type="entry name" value="Glu-5-SA_DH"/>
</dbReference>
<dbReference type="InterPro" id="IPR000965">
    <property type="entry name" value="GPR_dom"/>
</dbReference>
<dbReference type="NCBIfam" id="NF001221">
    <property type="entry name" value="PRK00197.1"/>
    <property type="match status" value="1"/>
</dbReference>
<dbReference type="NCBIfam" id="TIGR00407">
    <property type="entry name" value="proA"/>
    <property type="match status" value="1"/>
</dbReference>
<dbReference type="PANTHER" id="PTHR11063:SF8">
    <property type="entry name" value="DELTA-1-PYRROLINE-5-CARBOXYLATE SYNTHASE"/>
    <property type="match status" value="1"/>
</dbReference>
<dbReference type="PANTHER" id="PTHR11063">
    <property type="entry name" value="GLUTAMATE SEMIALDEHYDE DEHYDROGENASE"/>
    <property type="match status" value="1"/>
</dbReference>
<dbReference type="Pfam" id="PF00171">
    <property type="entry name" value="Aldedh"/>
    <property type="match status" value="2"/>
</dbReference>
<dbReference type="PIRSF" id="PIRSF000151">
    <property type="entry name" value="GPR"/>
    <property type="match status" value="1"/>
</dbReference>
<dbReference type="SUPFAM" id="SSF53720">
    <property type="entry name" value="ALDH-like"/>
    <property type="match status" value="1"/>
</dbReference>
<dbReference type="PROSITE" id="PS01223">
    <property type="entry name" value="PROA"/>
    <property type="match status" value="1"/>
</dbReference>